<organism>
    <name type="scientific">Brucella melitensis biotype 1 (strain ATCC 23456 / CCUG 17765 / NCTC 10094 / 16M)</name>
    <dbReference type="NCBI Taxonomy" id="224914"/>
    <lineage>
        <taxon>Bacteria</taxon>
        <taxon>Pseudomonadati</taxon>
        <taxon>Pseudomonadota</taxon>
        <taxon>Alphaproteobacteria</taxon>
        <taxon>Hyphomicrobiales</taxon>
        <taxon>Brucellaceae</taxon>
        <taxon>Brucella/Ochrobactrum group</taxon>
        <taxon>Brucella</taxon>
    </lineage>
</organism>
<proteinExistence type="evidence at protein level"/>
<name>FLIC_BRUME</name>
<protein>
    <recommendedName>
        <fullName>Flagellin</fullName>
    </recommendedName>
</protein>
<sequence>MASILTNSSALTALQTLASTNKSLESTQNRISTGLRISEASDNASYWSIATSMKSDNKANSAVQDALGLGAGKVDTAYSAINKIRESVDDIKTKLVSAMGASTEDKGKIETEIKSIVANINSALSNANYAGSNLLNGPTTDLNVVASYNRSGNAVAVDKITVKATDTDAKTMVKDIVDAGFFTSASDDTAIGTALNTVETALASLATGAATLGAAKSQIDSQKSFLSGLQDSIEKGVGTLVDADMNKESARLSALQVQQQLGVQALSIANSSNQSILSLFRG</sequence>
<evidence type="ECO:0000250" key="1"/>
<evidence type="ECO:0000269" key="2">
    <source>
    </source>
</evidence>
<evidence type="ECO:0000305" key="3"/>
<dbReference type="EMBL" id="AE008918">
    <property type="protein sequence ID" value="AAL53391.1"/>
    <property type="molecule type" value="Genomic_DNA"/>
</dbReference>
<dbReference type="PIR" id="AD3528">
    <property type="entry name" value="AD3528"/>
</dbReference>
<dbReference type="RefSeq" id="WP_004681009.1">
    <property type="nucleotide sequence ID" value="NZ_GG703779.1"/>
</dbReference>
<dbReference type="SMR" id="Q8YDM5"/>
<dbReference type="GeneID" id="29595008"/>
<dbReference type="KEGG" id="bme:BMEII0150"/>
<dbReference type="KEGG" id="bmel:DK63_3095"/>
<dbReference type="PATRIC" id="fig|224914.52.peg.3240"/>
<dbReference type="eggNOG" id="COG1344">
    <property type="taxonomic scope" value="Bacteria"/>
</dbReference>
<dbReference type="PhylomeDB" id="Q8YDM5"/>
<dbReference type="Proteomes" id="UP000000419">
    <property type="component" value="Chromosome II"/>
</dbReference>
<dbReference type="GO" id="GO:0009288">
    <property type="term" value="C:bacterial-type flagellum"/>
    <property type="evidence" value="ECO:0007669"/>
    <property type="project" value="UniProtKB-SubCell"/>
</dbReference>
<dbReference type="GO" id="GO:0005576">
    <property type="term" value="C:extracellular region"/>
    <property type="evidence" value="ECO:0007669"/>
    <property type="project" value="UniProtKB-SubCell"/>
</dbReference>
<dbReference type="GO" id="GO:0005198">
    <property type="term" value="F:structural molecule activity"/>
    <property type="evidence" value="ECO:0007669"/>
    <property type="project" value="InterPro"/>
</dbReference>
<dbReference type="Gene3D" id="1.20.1330.10">
    <property type="entry name" value="f41 fragment of flagellin, N-terminal domain"/>
    <property type="match status" value="1"/>
</dbReference>
<dbReference type="InterPro" id="IPR001492">
    <property type="entry name" value="Flagellin"/>
</dbReference>
<dbReference type="InterPro" id="IPR046358">
    <property type="entry name" value="Flagellin_C"/>
</dbReference>
<dbReference type="InterPro" id="IPR001029">
    <property type="entry name" value="Flagellin_N"/>
</dbReference>
<dbReference type="PANTHER" id="PTHR42792">
    <property type="entry name" value="FLAGELLIN"/>
    <property type="match status" value="1"/>
</dbReference>
<dbReference type="PANTHER" id="PTHR42792:SF2">
    <property type="entry name" value="FLAGELLIN"/>
    <property type="match status" value="1"/>
</dbReference>
<dbReference type="Pfam" id="PF00700">
    <property type="entry name" value="Flagellin_C"/>
    <property type="match status" value="1"/>
</dbReference>
<dbReference type="Pfam" id="PF00669">
    <property type="entry name" value="Flagellin_N"/>
    <property type="match status" value="1"/>
</dbReference>
<dbReference type="PRINTS" id="PR00207">
    <property type="entry name" value="FLAGELLIN"/>
</dbReference>
<dbReference type="SUPFAM" id="SSF64518">
    <property type="entry name" value="Phase 1 flagellin"/>
    <property type="match status" value="1"/>
</dbReference>
<feature type="chain" id="PRO_0000323998" description="Flagellin">
    <location>
        <begin position="1"/>
        <end position="282"/>
    </location>
</feature>
<accession>Q8YDM5</accession>
<reference key="1">
    <citation type="journal article" date="2002" name="Proc. Natl. Acad. Sci. U.S.A.">
        <title>The genome sequence of the facultative intracellular pathogen Brucella melitensis.</title>
        <authorList>
            <person name="DelVecchio V.G."/>
            <person name="Kapatral V."/>
            <person name="Redkar R.J."/>
            <person name="Patra G."/>
            <person name="Mujer C."/>
            <person name="Los T."/>
            <person name="Ivanova N."/>
            <person name="Anderson I."/>
            <person name="Bhattacharyya A."/>
            <person name="Lykidis A."/>
            <person name="Reznik G."/>
            <person name="Jablonski L."/>
            <person name="Larsen N."/>
            <person name="D'Souza M."/>
            <person name="Bernal A."/>
            <person name="Mazur M."/>
            <person name="Goltsman E."/>
            <person name="Selkov E."/>
            <person name="Elzer P.H."/>
            <person name="Hagius S."/>
            <person name="O'Callaghan D."/>
            <person name="Letesson J.-J."/>
            <person name="Haselkorn R."/>
            <person name="Kyrpides N.C."/>
            <person name="Overbeek R."/>
        </authorList>
    </citation>
    <scope>NUCLEOTIDE SEQUENCE [LARGE SCALE GENOMIC DNA]</scope>
    <source>
        <strain>ATCC 23456 / CCUG 17765 / NCTC 10094 / 16M</strain>
    </source>
</reference>
<reference key="2">
    <citation type="journal article" date="2005" name="Cell. Microbiol.">
        <title>The sheathed flagellum of Brucella melitensis is involved in persistence in a murine model of infection.</title>
        <authorList>
            <person name="Fretin D."/>
            <person name="Fauconnier A."/>
            <person name="Koehler S."/>
            <person name="Halling S."/>
            <person name="Leonard S."/>
            <person name="Nijskens C."/>
            <person name="Ferooz J."/>
            <person name="Lestrate P."/>
            <person name="Delrue R.-M."/>
            <person name="Danese I."/>
            <person name="Vandenhaute J."/>
            <person name="Tibor A."/>
            <person name="DeBolle X."/>
            <person name="Letesson J.-J."/>
        </authorList>
    </citation>
    <scope>FUNCTION IN INFECTION PERSISTENCE</scope>
    <scope>EXPRESSION</scope>
    <scope>DISRUPTION PHENOTYPE</scope>
    <source>
        <strain>ATCC 23456 / CCUG 17765 / NCTC 10094 / 16M</strain>
    </source>
</reference>
<comment type="function">
    <text evidence="1 2">Flagellin is the subunit protein which polymerizes to form the filaments of bacterial flagella (By similarity). The flagellum is required to cause a persistent disease in a murine model of infection.</text>
</comment>
<comment type="subcellular location">
    <subcellularLocation>
        <location>Secreted</location>
    </subcellularLocation>
    <subcellularLocation>
        <location>Bacterial flagellum</location>
    </subcellularLocation>
</comment>
<comment type="induction">
    <text>Expressed at the onset of the exponential phase (after 4, 8 and 12 hours of culture) but not at later time points.</text>
</comment>
<comment type="disruption phenotype">
    <text evidence="2">A fliC mutant is attenuated in a murine model of infection. As the infection progresses, the number of cfu per spleen from mice infected with the mutant is significantly lower than the number from mice infected with the wild-type.</text>
</comment>
<comment type="similarity">
    <text evidence="3">Belongs to the bacterial flagellin family.</text>
</comment>
<comment type="caution">
    <text evidence="3">Despite the presence of a stop codon in position 243 in the fliF gene and in position 127 in the flhA gene, it has been shown that B.melitensis is able to express genes corresponding to the M ring, the hook and the filament of the flagellar apparatus in the early log phase of growth in 2YT broth. Under these conditions, a polar and sheathed flagellar structure is visible by transmission electron microscopy.</text>
</comment>
<gene>
    <name type="primary">fliC</name>
    <name type="ordered locus">BMEII0150</name>
</gene>
<keyword id="KW-0975">Bacterial flagellum</keyword>
<keyword id="KW-0964">Secreted</keyword>